<sequence>MDKYAVIGNPVEHSLSPVIFQAFEKQTNHSFDYLKIKAPVNGFAAAVKKFHDKGGKGANITLPFKEEAYQLADKRSQEANEAHAASALQFREDGTIYAVNYDGLGLVQDLTRNHNITLTQKSILIVGAGGATRGILGPLLNAAPEKIVIVNRTPSKAHALAKIFHLRGEIQGGGFDELEPMRYDVIIHATSLGHQGKFPPLPDGLIGSQSCCYDLSYGKIASPFLQWAKDQGAKYNFDGLGMLVEHNAAVFYLWFGIYPDTNPVIEMLQAHL</sequence>
<name>AROE_COXBN</name>
<dbReference type="EC" id="1.1.1.25" evidence="1"/>
<dbReference type="EMBL" id="CP000733">
    <property type="protein sequence ID" value="ABS77362.1"/>
    <property type="molecule type" value="Genomic_DNA"/>
</dbReference>
<dbReference type="RefSeq" id="WP_011996427.1">
    <property type="nucleotide sequence ID" value="NC_009727.1"/>
</dbReference>
<dbReference type="SMR" id="A9KBC1"/>
<dbReference type="KEGG" id="cbd:CBUD_0135"/>
<dbReference type="HOGENOM" id="CLU_044063_2_1_6"/>
<dbReference type="UniPathway" id="UPA00053">
    <property type="reaction ID" value="UER00087"/>
</dbReference>
<dbReference type="Proteomes" id="UP000008555">
    <property type="component" value="Chromosome"/>
</dbReference>
<dbReference type="GO" id="GO:0005829">
    <property type="term" value="C:cytosol"/>
    <property type="evidence" value="ECO:0007669"/>
    <property type="project" value="TreeGrafter"/>
</dbReference>
<dbReference type="GO" id="GO:0050661">
    <property type="term" value="F:NADP binding"/>
    <property type="evidence" value="ECO:0007669"/>
    <property type="project" value="InterPro"/>
</dbReference>
<dbReference type="GO" id="GO:0004764">
    <property type="term" value="F:shikimate 3-dehydrogenase (NADP+) activity"/>
    <property type="evidence" value="ECO:0007669"/>
    <property type="project" value="UniProtKB-UniRule"/>
</dbReference>
<dbReference type="GO" id="GO:0008652">
    <property type="term" value="P:amino acid biosynthetic process"/>
    <property type="evidence" value="ECO:0007669"/>
    <property type="project" value="UniProtKB-KW"/>
</dbReference>
<dbReference type="GO" id="GO:0009073">
    <property type="term" value="P:aromatic amino acid family biosynthetic process"/>
    <property type="evidence" value="ECO:0007669"/>
    <property type="project" value="UniProtKB-KW"/>
</dbReference>
<dbReference type="GO" id="GO:0009423">
    <property type="term" value="P:chorismate biosynthetic process"/>
    <property type="evidence" value="ECO:0007669"/>
    <property type="project" value="UniProtKB-UniRule"/>
</dbReference>
<dbReference type="GO" id="GO:0019632">
    <property type="term" value="P:shikimate metabolic process"/>
    <property type="evidence" value="ECO:0007669"/>
    <property type="project" value="InterPro"/>
</dbReference>
<dbReference type="CDD" id="cd01065">
    <property type="entry name" value="NAD_bind_Shikimate_DH"/>
    <property type="match status" value="1"/>
</dbReference>
<dbReference type="FunFam" id="3.40.50.10860:FF:000006">
    <property type="entry name" value="Shikimate dehydrogenase (NADP(+))"/>
    <property type="match status" value="1"/>
</dbReference>
<dbReference type="FunFam" id="3.40.50.720:FF:000104">
    <property type="entry name" value="Shikimate dehydrogenase (NADP(+))"/>
    <property type="match status" value="1"/>
</dbReference>
<dbReference type="Gene3D" id="3.40.50.10860">
    <property type="entry name" value="Leucine Dehydrogenase, chain A, domain 1"/>
    <property type="match status" value="1"/>
</dbReference>
<dbReference type="Gene3D" id="3.40.50.720">
    <property type="entry name" value="NAD(P)-binding Rossmann-like Domain"/>
    <property type="match status" value="1"/>
</dbReference>
<dbReference type="HAMAP" id="MF_00222">
    <property type="entry name" value="Shikimate_DH_AroE"/>
    <property type="match status" value="1"/>
</dbReference>
<dbReference type="InterPro" id="IPR046346">
    <property type="entry name" value="Aminoacid_DH-like_N_sf"/>
</dbReference>
<dbReference type="InterPro" id="IPR036291">
    <property type="entry name" value="NAD(P)-bd_dom_sf"/>
</dbReference>
<dbReference type="InterPro" id="IPR011342">
    <property type="entry name" value="Shikimate_DH"/>
</dbReference>
<dbReference type="InterPro" id="IPR013708">
    <property type="entry name" value="Shikimate_DH-bd_N"/>
</dbReference>
<dbReference type="InterPro" id="IPR022893">
    <property type="entry name" value="Shikimate_DH_fam"/>
</dbReference>
<dbReference type="InterPro" id="IPR006151">
    <property type="entry name" value="Shikm_DH/Glu-tRNA_Rdtase"/>
</dbReference>
<dbReference type="NCBIfam" id="TIGR00507">
    <property type="entry name" value="aroE"/>
    <property type="match status" value="1"/>
</dbReference>
<dbReference type="NCBIfam" id="NF001310">
    <property type="entry name" value="PRK00258.1-2"/>
    <property type="match status" value="1"/>
</dbReference>
<dbReference type="PANTHER" id="PTHR21089:SF1">
    <property type="entry name" value="BIFUNCTIONAL 3-DEHYDROQUINATE DEHYDRATASE_SHIKIMATE DEHYDROGENASE, CHLOROPLASTIC"/>
    <property type="match status" value="1"/>
</dbReference>
<dbReference type="PANTHER" id="PTHR21089">
    <property type="entry name" value="SHIKIMATE DEHYDROGENASE"/>
    <property type="match status" value="1"/>
</dbReference>
<dbReference type="Pfam" id="PF01488">
    <property type="entry name" value="Shikimate_DH"/>
    <property type="match status" value="1"/>
</dbReference>
<dbReference type="Pfam" id="PF08501">
    <property type="entry name" value="Shikimate_dh_N"/>
    <property type="match status" value="1"/>
</dbReference>
<dbReference type="SUPFAM" id="SSF53223">
    <property type="entry name" value="Aminoacid dehydrogenase-like, N-terminal domain"/>
    <property type="match status" value="1"/>
</dbReference>
<dbReference type="SUPFAM" id="SSF51735">
    <property type="entry name" value="NAD(P)-binding Rossmann-fold domains"/>
    <property type="match status" value="1"/>
</dbReference>
<comment type="function">
    <text evidence="1">Involved in the biosynthesis of the chorismate, which leads to the biosynthesis of aromatic amino acids. Catalyzes the reversible NADPH linked reduction of 3-dehydroshikimate (DHSA) to yield shikimate (SA).</text>
</comment>
<comment type="catalytic activity">
    <reaction evidence="1">
        <text>shikimate + NADP(+) = 3-dehydroshikimate + NADPH + H(+)</text>
        <dbReference type="Rhea" id="RHEA:17737"/>
        <dbReference type="ChEBI" id="CHEBI:15378"/>
        <dbReference type="ChEBI" id="CHEBI:16630"/>
        <dbReference type="ChEBI" id="CHEBI:36208"/>
        <dbReference type="ChEBI" id="CHEBI:57783"/>
        <dbReference type="ChEBI" id="CHEBI:58349"/>
        <dbReference type="EC" id="1.1.1.25"/>
    </reaction>
</comment>
<comment type="pathway">
    <text evidence="1">Metabolic intermediate biosynthesis; chorismate biosynthesis; chorismate from D-erythrose 4-phosphate and phosphoenolpyruvate: step 4/7.</text>
</comment>
<comment type="subunit">
    <text evidence="1">Homodimer.</text>
</comment>
<comment type="similarity">
    <text evidence="1">Belongs to the shikimate dehydrogenase family.</text>
</comment>
<keyword id="KW-0028">Amino-acid biosynthesis</keyword>
<keyword id="KW-0057">Aromatic amino acid biosynthesis</keyword>
<keyword id="KW-0521">NADP</keyword>
<keyword id="KW-0560">Oxidoreductase</keyword>
<accession>A9KBC1</accession>
<organism>
    <name type="scientific">Coxiella burnetii (strain Dugway 5J108-111)</name>
    <dbReference type="NCBI Taxonomy" id="434922"/>
    <lineage>
        <taxon>Bacteria</taxon>
        <taxon>Pseudomonadati</taxon>
        <taxon>Pseudomonadota</taxon>
        <taxon>Gammaproteobacteria</taxon>
        <taxon>Legionellales</taxon>
        <taxon>Coxiellaceae</taxon>
        <taxon>Coxiella</taxon>
    </lineage>
</organism>
<evidence type="ECO:0000255" key="1">
    <source>
        <dbReference type="HAMAP-Rule" id="MF_00222"/>
    </source>
</evidence>
<feature type="chain" id="PRO_1000078117" description="Shikimate dehydrogenase (NADP(+))">
    <location>
        <begin position="1"/>
        <end position="272"/>
    </location>
</feature>
<feature type="active site" description="Proton acceptor" evidence="1">
    <location>
        <position position="65"/>
    </location>
</feature>
<feature type="binding site" evidence="1">
    <location>
        <begin position="14"/>
        <end position="16"/>
    </location>
    <ligand>
        <name>shikimate</name>
        <dbReference type="ChEBI" id="CHEBI:36208"/>
    </ligand>
</feature>
<feature type="binding site" evidence="1">
    <location>
        <position position="61"/>
    </location>
    <ligand>
        <name>shikimate</name>
        <dbReference type="ChEBI" id="CHEBI:36208"/>
    </ligand>
</feature>
<feature type="binding site" evidence="1">
    <location>
        <position position="102"/>
    </location>
    <ligand>
        <name>shikimate</name>
        <dbReference type="ChEBI" id="CHEBI:36208"/>
    </ligand>
</feature>
<feature type="binding site" evidence="1">
    <location>
        <begin position="127"/>
        <end position="131"/>
    </location>
    <ligand>
        <name>NADP(+)</name>
        <dbReference type="ChEBI" id="CHEBI:58349"/>
    </ligand>
</feature>
<feature type="binding site" evidence="1">
    <location>
        <begin position="151"/>
        <end position="156"/>
    </location>
    <ligand>
        <name>NADP(+)</name>
        <dbReference type="ChEBI" id="CHEBI:58349"/>
    </ligand>
</feature>
<feature type="binding site" evidence="1">
    <location>
        <position position="215"/>
    </location>
    <ligand>
        <name>NADP(+)</name>
        <dbReference type="ChEBI" id="CHEBI:58349"/>
    </ligand>
</feature>
<feature type="binding site" evidence="1">
    <location>
        <position position="217"/>
    </location>
    <ligand>
        <name>shikimate</name>
        <dbReference type="ChEBI" id="CHEBI:36208"/>
    </ligand>
</feature>
<feature type="binding site" evidence="1">
    <location>
        <position position="239"/>
    </location>
    <ligand>
        <name>NADP(+)</name>
        <dbReference type="ChEBI" id="CHEBI:58349"/>
    </ligand>
</feature>
<proteinExistence type="inferred from homology"/>
<protein>
    <recommendedName>
        <fullName evidence="1">Shikimate dehydrogenase (NADP(+))</fullName>
        <shortName evidence="1">SDH</shortName>
        <ecNumber evidence="1">1.1.1.25</ecNumber>
    </recommendedName>
</protein>
<gene>
    <name evidence="1" type="primary">aroE</name>
    <name type="ordered locus">CBUD_0135</name>
</gene>
<reference key="1">
    <citation type="journal article" date="2009" name="Infect. Immun.">
        <title>Comparative genomics reveal extensive transposon-mediated genomic plasticity and diversity among potential effector proteins within the genus Coxiella.</title>
        <authorList>
            <person name="Beare P.A."/>
            <person name="Unsworth N."/>
            <person name="Andoh M."/>
            <person name="Voth D.E."/>
            <person name="Omsland A."/>
            <person name="Gilk S.D."/>
            <person name="Williams K.P."/>
            <person name="Sobral B.W."/>
            <person name="Kupko J.J. III"/>
            <person name="Porcella S.F."/>
            <person name="Samuel J.E."/>
            <person name="Heinzen R.A."/>
        </authorList>
    </citation>
    <scope>NUCLEOTIDE SEQUENCE [LARGE SCALE GENOMIC DNA]</scope>
    <source>
        <strain>Dugway 5J108-111</strain>
    </source>
</reference>